<comment type="catalytic activity">
    <reaction evidence="1">
        <text>beta-D-fructose 1,6-bisphosphate + H2O = beta-D-fructose 6-phosphate + phosphate</text>
        <dbReference type="Rhea" id="RHEA:11064"/>
        <dbReference type="ChEBI" id="CHEBI:15377"/>
        <dbReference type="ChEBI" id="CHEBI:32966"/>
        <dbReference type="ChEBI" id="CHEBI:43474"/>
        <dbReference type="ChEBI" id="CHEBI:57634"/>
        <dbReference type="EC" id="3.1.3.11"/>
    </reaction>
</comment>
<comment type="pathway">
    <text evidence="1">Carbohydrate biosynthesis; gluconeogenesis.</text>
</comment>
<comment type="subunit">
    <text evidence="1">Homotetramer.</text>
</comment>
<comment type="subcellular location">
    <subcellularLocation>
        <location evidence="1">Cytoplasm</location>
    </subcellularLocation>
</comment>
<comment type="similarity">
    <text evidence="1">Belongs to the FBPase class 1 family.</text>
</comment>
<proteinExistence type="inferred from homology"/>
<keyword id="KW-0119">Carbohydrate metabolism</keyword>
<keyword id="KW-0963">Cytoplasm</keyword>
<keyword id="KW-0378">Hydrolase</keyword>
<reference key="1">
    <citation type="submission" date="2008-02" db="EMBL/GenBank/DDBJ databases">
        <title>Complete sequence of chromosome of Methylobacterium sp. 4-46.</title>
        <authorList>
            <consortium name="US DOE Joint Genome Institute"/>
            <person name="Copeland A."/>
            <person name="Lucas S."/>
            <person name="Lapidus A."/>
            <person name="Glavina del Rio T."/>
            <person name="Dalin E."/>
            <person name="Tice H."/>
            <person name="Bruce D."/>
            <person name="Goodwin L."/>
            <person name="Pitluck S."/>
            <person name="Chertkov O."/>
            <person name="Brettin T."/>
            <person name="Detter J.C."/>
            <person name="Han C."/>
            <person name="Kuske C.R."/>
            <person name="Schmutz J."/>
            <person name="Larimer F."/>
            <person name="Land M."/>
            <person name="Hauser L."/>
            <person name="Kyrpides N."/>
            <person name="Ivanova N."/>
            <person name="Marx C.J."/>
            <person name="Richardson P."/>
        </authorList>
    </citation>
    <scope>NUCLEOTIDE SEQUENCE [LARGE SCALE GENOMIC DNA]</scope>
    <source>
        <strain>4-46</strain>
    </source>
</reference>
<organism>
    <name type="scientific">Methylobacterium sp. (strain 4-46)</name>
    <dbReference type="NCBI Taxonomy" id="426117"/>
    <lineage>
        <taxon>Bacteria</taxon>
        <taxon>Pseudomonadati</taxon>
        <taxon>Pseudomonadota</taxon>
        <taxon>Alphaproteobacteria</taxon>
        <taxon>Hyphomicrobiales</taxon>
        <taxon>Methylobacteriaceae</taxon>
        <taxon>Methylobacterium</taxon>
    </lineage>
</organism>
<evidence type="ECO:0000255" key="1">
    <source>
        <dbReference type="HAMAP-Rule" id="MF_01855"/>
    </source>
</evidence>
<protein>
    <recommendedName>
        <fullName evidence="1">Fructose-1,6-bisphosphatase class 1</fullName>
        <shortName evidence="1">FBPase class 1</shortName>
        <ecNumber evidence="1">3.1.3.11</ecNumber>
    </recommendedName>
    <alternativeName>
        <fullName evidence="1">D-fructose-1,6-bisphosphate 1-phosphohydrolase class 1</fullName>
    </alternativeName>
</protein>
<feature type="chain" id="PRO_0000364603" description="Fructose-1,6-bisphosphatase class 1">
    <location>
        <begin position="1"/>
        <end position="326"/>
    </location>
</feature>
<dbReference type="EC" id="3.1.3.11" evidence="1"/>
<dbReference type="EMBL" id="CP000943">
    <property type="protein sequence ID" value="ACA16742.1"/>
    <property type="molecule type" value="Genomic_DNA"/>
</dbReference>
<dbReference type="RefSeq" id="WP_012332151.1">
    <property type="nucleotide sequence ID" value="NC_010511.1"/>
</dbReference>
<dbReference type="SMR" id="B0UEK2"/>
<dbReference type="STRING" id="426117.M446_2282"/>
<dbReference type="KEGG" id="met:M446_2282"/>
<dbReference type="eggNOG" id="COG0158">
    <property type="taxonomic scope" value="Bacteria"/>
</dbReference>
<dbReference type="HOGENOM" id="CLU_039977_0_0_5"/>
<dbReference type="UniPathway" id="UPA00138"/>
<dbReference type="GO" id="GO:0005829">
    <property type="term" value="C:cytosol"/>
    <property type="evidence" value="ECO:0007669"/>
    <property type="project" value="TreeGrafter"/>
</dbReference>
<dbReference type="GO" id="GO:0042132">
    <property type="term" value="F:fructose 1,6-bisphosphate 1-phosphatase activity"/>
    <property type="evidence" value="ECO:0007669"/>
    <property type="project" value="UniProtKB-UniRule"/>
</dbReference>
<dbReference type="GO" id="GO:0030388">
    <property type="term" value="P:fructose 1,6-bisphosphate metabolic process"/>
    <property type="evidence" value="ECO:0007669"/>
    <property type="project" value="TreeGrafter"/>
</dbReference>
<dbReference type="GO" id="GO:0006002">
    <property type="term" value="P:fructose 6-phosphate metabolic process"/>
    <property type="evidence" value="ECO:0007669"/>
    <property type="project" value="TreeGrafter"/>
</dbReference>
<dbReference type="GO" id="GO:0006000">
    <property type="term" value="P:fructose metabolic process"/>
    <property type="evidence" value="ECO:0007669"/>
    <property type="project" value="TreeGrafter"/>
</dbReference>
<dbReference type="GO" id="GO:0006094">
    <property type="term" value="P:gluconeogenesis"/>
    <property type="evidence" value="ECO:0007669"/>
    <property type="project" value="UniProtKB-UniRule"/>
</dbReference>
<dbReference type="GO" id="GO:0005986">
    <property type="term" value="P:sucrose biosynthetic process"/>
    <property type="evidence" value="ECO:0007669"/>
    <property type="project" value="TreeGrafter"/>
</dbReference>
<dbReference type="Gene3D" id="3.40.190.80">
    <property type="match status" value="1"/>
</dbReference>
<dbReference type="Gene3D" id="3.30.540.10">
    <property type="entry name" value="Fructose-1,6-Bisphosphatase, subunit A, domain 1"/>
    <property type="match status" value="1"/>
</dbReference>
<dbReference type="HAMAP" id="MF_01855">
    <property type="entry name" value="FBPase_class1"/>
    <property type="match status" value="1"/>
</dbReference>
<dbReference type="InterPro" id="IPR044015">
    <property type="entry name" value="FBPase_C_dom"/>
</dbReference>
<dbReference type="InterPro" id="IPR000146">
    <property type="entry name" value="FBPase_class-1"/>
</dbReference>
<dbReference type="InterPro" id="IPR033391">
    <property type="entry name" value="FBPase_N"/>
</dbReference>
<dbReference type="InterPro" id="IPR028343">
    <property type="entry name" value="FBPtase"/>
</dbReference>
<dbReference type="PANTHER" id="PTHR11556">
    <property type="entry name" value="FRUCTOSE-1,6-BISPHOSPHATASE-RELATED"/>
    <property type="match status" value="1"/>
</dbReference>
<dbReference type="PANTHER" id="PTHR11556:SF35">
    <property type="entry name" value="SEDOHEPTULOSE-1,7-BISPHOSPHATASE, CHLOROPLASTIC"/>
    <property type="match status" value="1"/>
</dbReference>
<dbReference type="Pfam" id="PF00316">
    <property type="entry name" value="FBPase"/>
    <property type="match status" value="1"/>
</dbReference>
<dbReference type="Pfam" id="PF18913">
    <property type="entry name" value="FBPase_C"/>
    <property type="match status" value="1"/>
</dbReference>
<dbReference type="PIRSF" id="PIRSF000904">
    <property type="entry name" value="FBPtase_SBPase"/>
    <property type="match status" value="1"/>
</dbReference>
<dbReference type="PRINTS" id="PR00115">
    <property type="entry name" value="F16BPHPHTASE"/>
</dbReference>
<dbReference type="SUPFAM" id="SSF56655">
    <property type="entry name" value="Carbohydrate phosphatase"/>
    <property type="match status" value="1"/>
</dbReference>
<gene>
    <name evidence="1" type="primary">fbp</name>
    <name type="ordered locus">M446_2282</name>
</gene>
<accession>B0UEK2</accession>
<name>F16PA_METS4</name>
<sequence>MGLGSRLDACLAREVAGGDRPIAAVLAALAEAAAGTGRLLRDGGADAGPDDLDAAVQARFVAALRETPTALLALPEAEAPLALMPDGAIAVALTPLDGRENLAGNQPAGTLFSLRPAAGAPFREPGRIQVAAGFVTYGPRTELAVTWGAGARIFTLDPSGAFRLSREAVAIPPTSTLYAIDAANARFWEAPMRAFVEDCLRGSEGPRGQDFAMGWCASLAVGAQRALCRGGVHILPGETRRGRANGATRLIHEAAPIALVMEAAGGAATDGRDARILDLPTLDLQQRTPLVFGSAEEVACVGKYHDGRRHTGARSPLFGQRGLLRA</sequence>